<gene>
    <name evidence="1" type="primary">deoC</name>
    <name type="ordered locus">EcSMS35_4930</name>
</gene>
<organism>
    <name type="scientific">Escherichia coli (strain SMS-3-5 / SECEC)</name>
    <dbReference type="NCBI Taxonomy" id="439855"/>
    <lineage>
        <taxon>Bacteria</taxon>
        <taxon>Pseudomonadati</taxon>
        <taxon>Pseudomonadota</taxon>
        <taxon>Gammaproteobacteria</taxon>
        <taxon>Enterobacterales</taxon>
        <taxon>Enterobacteriaceae</taxon>
        <taxon>Escherichia</taxon>
    </lineage>
</organism>
<sequence>MTDLKASSLRALKLMDLTTLNDDDTDEKVIALCHQAKTPVGNTAAICIYPRFIPIARKTLKEQGTPEIRIATVTNFPHGNDDIEIALAETRAAIAYGADEVDVVFPYRALMAGNEQVGFDLVKACKEACAAANVLLKVIIETGELKDEALIRKASEISIKAGADFIKTSTGKVAVNATPESARIMMEVIRDMGVEKTVGFKPAGGVRTAEDAQKYLSIADELFGADWADARHYRFGASSLLASLLKALGHGDGKSASSY</sequence>
<proteinExistence type="inferred from homology"/>
<accession>B1LEI6</accession>
<evidence type="ECO:0000255" key="1">
    <source>
        <dbReference type="HAMAP-Rule" id="MF_00592"/>
    </source>
</evidence>
<protein>
    <recommendedName>
        <fullName evidence="1">Deoxyribose-phosphate aldolase</fullName>
        <shortName evidence="1">DERA</shortName>
        <ecNumber evidence="1">4.1.2.4</ecNumber>
    </recommendedName>
    <alternativeName>
        <fullName evidence="1">2-deoxy-D-ribose 5-phosphate aldolase</fullName>
    </alternativeName>
    <alternativeName>
        <fullName evidence="1">Phosphodeoxyriboaldolase</fullName>
        <shortName evidence="1">Deoxyriboaldolase</shortName>
    </alternativeName>
</protein>
<feature type="chain" id="PRO_1000129806" description="Deoxyribose-phosphate aldolase">
    <location>
        <begin position="1"/>
        <end position="259"/>
    </location>
</feature>
<feature type="active site" description="Proton donor/acceptor" evidence="1">
    <location>
        <position position="102"/>
    </location>
</feature>
<feature type="active site" description="Schiff-base intermediate with acetaldehyde" evidence="1">
    <location>
        <position position="167"/>
    </location>
</feature>
<feature type="active site" description="Proton donor/acceptor" evidence="1">
    <location>
        <position position="201"/>
    </location>
</feature>
<reference key="1">
    <citation type="journal article" date="2008" name="J. Bacteriol.">
        <title>Insights into the environmental resistance gene pool from the genome sequence of the multidrug-resistant environmental isolate Escherichia coli SMS-3-5.</title>
        <authorList>
            <person name="Fricke W.F."/>
            <person name="Wright M.S."/>
            <person name="Lindell A.H."/>
            <person name="Harkins D.M."/>
            <person name="Baker-Austin C."/>
            <person name="Ravel J."/>
            <person name="Stepanauskas R."/>
        </authorList>
    </citation>
    <scope>NUCLEOTIDE SEQUENCE [LARGE SCALE GENOMIC DNA]</scope>
    <source>
        <strain>SMS-3-5 / SECEC</strain>
    </source>
</reference>
<dbReference type="EC" id="4.1.2.4" evidence="1"/>
<dbReference type="EMBL" id="CP000970">
    <property type="protein sequence ID" value="ACB16907.1"/>
    <property type="molecule type" value="Genomic_DNA"/>
</dbReference>
<dbReference type="RefSeq" id="WP_001330391.1">
    <property type="nucleotide sequence ID" value="NC_010498.1"/>
</dbReference>
<dbReference type="SMR" id="B1LEI6"/>
<dbReference type="KEGG" id="ecm:EcSMS35_4930"/>
<dbReference type="HOGENOM" id="CLU_053595_3_1_6"/>
<dbReference type="UniPathway" id="UPA00002">
    <property type="reaction ID" value="UER00468"/>
</dbReference>
<dbReference type="Proteomes" id="UP000007011">
    <property type="component" value="Chromosome"/>
</dbReference>
<dbReference type="GO" id="GO:0005737">
    <property type="term" value="C:cytoplasm"/>
    <property type="evidence" value="ECO:0007669"/>
    <property type="project" value="UniProtKB-SubCell"/>
</dbReference>
<dbReference type="GO" id="GO:0004139">
    <property type="term" value="F:deoxyribose-phosphate aldolase activity"/>
    <property type="evidence" value="ECO:0007669"/>
    <property type="project" value="UniProtKB-UniRule"/>
</dbReference>
<dbReference type="GO" id="GO:0006018">
    <property type="term" value="P:2-deoxyribose 1-phosphate catabolic process"/>
    <property type="evidence" value="ECO:0007669"/>
    <property type="project" value="UniProtKB-UniRule"/>
</dbReference>
<dbReference type="GO" id="GO:0016052">
    <property type="term" value="P:carbohydrate catabolic process"/>
    <property type="evidence" value="ECO:0007669"/>
    <property type="project" value="TreeGrafter"/>
</dbReference>
<dbReference type="GO" id="GO:0009264">
    <property type="term" value="P:deoxyribonucleotide catabolic process"/>
    <property type="evidence" value="ECO:0007669"/>
    <property type="project" value="InterPro"/>
</dbReference>
<dbReference type="CDD" id="cd00959">
    <property type="entry name" value="DeoC"/>
    <property type="match status" value="1"/>
</dbReference>
<dbReference type="FunFam" id="3.20.20.70:FF:000034">
    <property type="entry name" value="Deoxyribose-phosphate aldolase"/>
    <property type="match status" value="1"/>
</dbReference>
<dbReference type="Gene3D" id="3.20.20.70">
    <property type="entry name" value="Aldolase class I"/>
    <property type="match status" value="1"/>
</dbReference>
<dbReference type="HAMAP" id="MF_00592">
    <property type="entry name" value="DeoC_type2"/>
    <property type="match status" value="1"/>
</dbReference>
<dbReference type="InterPro" id="IPR013785">
    <property type="entry name" value="Aldolase_TIM"/>
</dbReference>
<dbReference type="InterPro" id="IPR011343">
    <property type="entry name" value="DeoC"/>
</dbReference>
<dbReference type="InterPro" id="IPR002915">
    <property type="entry name" value="DeoC/FbaB/LacD_aldolase"/>
</dbReference>
<dbReference type="InterPro" id="IPR023649">
    <property type="entry name" value="DeoC_typeII"/>
</dbReference>
<dbReference type="NCBIfam" id="TIGR00126">
    <property type="entry name" value="deoC"/>
    <property type="match status" value="1"/>
</dbReference>
<dbReference type="PANTHER" id="PTHR10889">
    <property type="entry name" value="DEOXYRIBOSE-PHOSPHATE ALDOLASE"/>
    <property type="match status" value="1"/>
</dbReference>
<dbReference type="PANTHER" id="PTHR10889:SF3">
    <property type="entry name" value="DEOXYRIBOSE-PHOSPHATE ALDOLASE"/>
    <property type="match status" value="1"/>
</dbReference>
<dbReference type="Pfam" id="PF01791">
    <property type="entry name" value="DeoC"/>
    <property type="match status" value="1"/>
</dbReference>
<dbReference type="PIRSF" id="PIRSF001357">
    <property type="entry name" value="DeoC"/>
    <property type="match status" value="1"/>
</dbReference>
<dbReference type="SMART" id="SM01133">
    <property type="entry name" value="DeoC"/>
    <property type="match status" value="1"/>
</dbReference>
<dbReference type="SUPFAM" id="SSF51569">
    <property type="entry name" value="Aldolase"/>
    <property type="match status" value="1"/>
</dbReference>
<name>DEOC_ECOSM</name>
<comment type="function">
    <text evidence="1">Catalyzes a reversible aldol reaction between acetaldehyde and D-glyceraldehyde 3-phosphate to generate 2-deoxy-D-ribose 5-phosphate.</text>
</comment>
<comment type="catalytic activity">
    <reaction evidence="1">
        <text>2-deoxy-D-ribose 5-phosphate = D-glyceraldehyde 3-phosphate + acetaldehyde</text>
        <dbReference type="Rhea" id="RHEA:12821"/>
        <dbReference type="ChEBI" id="CHEBI:15343"/>
        <dbReference type="ChEBI" id="CHEBI:59776"/>
        <dbReference type="ChEBI" id="CHEBI:62877"/>
        <dbReference type="EC" id="4.1.2.4"/>
    </reaction>
</comment>
<comment type="pathway">
    <text evidence="1">Carbohydrate degradation; 2-deoxy-D-ribose 1-phosphate degradation; D-glyceraldehyde 3-phosphate and acetaldehyde from 2-deoxy-alpha-D-ribose 1-phosphate: step 2/2.</text>
</comment>
<comment type="subcellular location">
    <subcellularLocation>
        <location evidence="1">Cytoplasm</location>
    </subcellularLocation>
</comment>
<comment type="similarity">
    <text evidence="1">Belongs to the DeoC/FbaB aldolase family. DeoC type 2 subfamily.</text>
</comment>
<keyword id="KW-0963">Cytoplasm</keyword>
<keyword id="KW-0456">Lyase</keyword>
<keyword id="KW-0704">Schiff base</keyword>